<protein>
    <recommendedName>
        <fullName evidence="9">Muscarinic toxin 1</fullName>
        <shortName evidence="9">MT1</shortName>
        <shortName evidence="8">MTx1</shortName>
    </recommendedName>
</protein>
<name>3SIM1_DENAN</name>
<feature type="chain" id="PRO_0000093641" description="Muscarinic toxin 1" evidence="5 7">
    <location>
        <begin position="1"/>
        <end position="66"/>
    </location>
</feature>
<feature type="disulfide bond" evidence="3 12 13 14">
    <location>
        <begin position="3"/>
        <end position="24"/>
    </location>
</feature>
<feature type="disulfide bond" evidence="3 12 13 14">
    <location>
        <begin position="17"/>
        <end position="42"/>
    </location>
</feature>
<feature type="disulfide bond" evidence="3 12 13 14">
    <location>
        <begin position="46"/>
        <end position="58"/>
    </location>
</feature>
<feature type="disulfide bond" evidence="3 12 13 14">
    <location>
        <begin position="59"/>
        <end position="64"/>
    </location>
</feature>
<feature type="mutagenesis site" description="Binds with 170-fold reduced affinity to M1 muscarinic acetylcholine receptors." evidence="1">
    <original>R</original>
    <variation>A</variation>
    <location>
        <position position="34"/>
    </location>
</feature>
<feature type="strand" evidence="15">
    <location>
        <begin position="2"/>
        <end position="8"/>
    </location>
</feature>
<feature type="strand" evidence="15">
    <location>
        <begin position="11"/>
        <end position="16"/>
    </location>
</feature>
<feature type="strand" evidence="15">
    <location>
        <begin position="23"/>
        <end position="26"/>
    </location>
</feature>
<feature type="strand" evidence="17">
    <location>
        <begin position="35"/>
        <end position="45"/>
    </location>
</feature>
<feature type="strand" evidence="16">
    <location>
        <begin position="54"/>
        <end position="59"/>
    </location>
</feature>
<feature type="turn" evidence="17">
    <location>
        <begin position="62"/>
        <end position="65"/>
    </location>
</feature>
<evidence type="ECO:0000269" key="1">
    <source>
    </source>
</evidence>
<evidence type="ECO:0000269" key="2">
    <source>
    </source>
</evidence>
<evidence type="ECO:0000269" key="3">
    <source>
    </source>
</evidence>
<evidence type="ECO:0000269" key="4">
    <source>
    </source>
</evidence>
<evidence type="ECO:0000269" key="5">
    <source>
    </source>
</evidence>
<evidence type="ECO:0000269" key="6">
    <source>
    </source>
</evidence>
<evidence type="ECO:0000269" key="7">
    <source>
    </source>
</evidence>
<evidence type="ECO:0000303" key="8">
    <source>
    </source>
</evidence>
<evidence type="ECO:0000303" key="9">
    <source>
    </source>
</evidence>
<evidence type="ECO:0000305" key="10"/>
<evidence type="ECO:0000305" key="11">
    <source>
    </source>
</evidence>
<evidence type="ECO:0000312" key="12">
    <source>
        <dbReference type="PDB" id="3FEV"/>
    </source>
</evidence>
<evidence type="ECO:0000312" key="13">
    <source>
        <dbReference type="PDB" id="3NEQ"/>
    </source>
</evidence>
<evidence type="ECO:0000312" key="14">
    <source>
        <dbReference type="PDB" id="4DO8"/>
    </source>
</evidence>
<evidence type="ECO:0007829" key="15">
    <source>
        <dbReference type="PDB" id="3FEV"/>
    </source>
</evidence>
<evidence type="ECO:0007829" key="16">
    <source>
        <dbReference type="PDB" id="3NEQ"/>
    </source>
</evidence>
<evidence type="ECO:0007829" key="17">
    <source>
        <dbReference type="PDB" id="4DO8"/>
    </source>
</evidence>
<dbReference type="PDB" id="3FEV">
    <property type="method" value="X-ray"/>
    <property type="resolution" value="1.30 A"/>
    <property type="chains" value="A/B/C=1-16"/>
</dbReference>
<dbReference type="PDB" id="3NEQ">
    <property type="method" value="X-ray"/>
    <property type="resolution" value="1.25 A"/>
    <property type="chains" value="A/B=49-57"/>
</dbReference>
<dbReference type="PDB" id="4DO8">
    <property type="method" value="X-ray"/>
    <property type="resolution" value="1.80 A"/>
    <property type="chains" value="A/B=1-66"/>
</dbReference>
<dbReference type="PDBsum" id="3FEV"/>
<dbReference type="PDBsum" id="3NEQ"/>
<dbReference type="PDBsum" id="4DO8"/>
<dbReference type="SMR" id="P81030"/>
<dbReference type="TCDB" id="1.C.74.1.6">
    <property type="family name" value="the snake cytotoxin (sct) family"/>
</dbReference>
<dbReference type="EvolutionaryTrace" id="P81030"/>
<dbReference type="GO" id="GO:0005576">
    <property type="term" value="C:extracellular region"/>
    <property type="evidence" value="ECO:0007669"/>
    <property type="project" value="UniProtKB-SubCell"/>
</dbReference>
<dbReference type="GO" id="GO:0090729">
    <property type="term" value="F:toxin activity"/>
    <property type="evidence" value="ECO:0007669"/>
    <property type="project" value="UniProtKB-KW"/>
</dbReference>
<dbReference type="CDD" id="cd00206">
    <property type="entry name" value="TFP_snake_toxin"/>
    <property type="match status" value="1"/>
</dbReference>
<dbReference type="FunFam" id="2.10.60.10:FF:000024">
    <property type="entry name" value="Cytotoxin 1"/>
    <property type="match status" value="1"/>
</dbReference>
<dbReference type="Gene3D" id="2.10.60.10">
    <property type="entry name" value="CD59"/>
    <property type="match status" value="1"/>
</dbReference>
<dbReference type="InterPro" id="IPR003571">
    <property type="entry name" value="Snake_3FTx"/>
</dbReference>
<dbReference type="InterPro" id="IPR045860">
    <property type="entry name" value="Snake_toxin-like_sf"/>
</dbReference>
<dbReference type="InterPro" id="IPR018354">
    <property type="entry name" value="Snake_toxin_con_site"/>
</dbReference>
<dbReference type="InterPro" id="IPR054131">
    <property type="entry name" value="Toxin_cobra-type"/>
</dbReference>
<dbReference type="Pfam" id="PF21947">
    <property type="entry name" value="Toxin_cobra-type"/>
    <property type="match status" value="1"/>
</dbReference>
<dbReference type="SUPFAM" id="SSF57302">
    <property type="entry name" value="Snake toxin-like"/>
    <property type="match status" value="1"/>
</dbReference>
<dbReference type="PROSITE" id="PS00272">
    <property type="entry name" value="SNAKE_TOXIN"/>
    <property type="match status" value="1"/>
</dbReference>
<keyword id="KW-0002">3D-structure</keyword>
<keyword id="KW-0903">Direct protein sequencing</keyword>
<keyword id="KW-1015">Disulfide bond</keyword>
<keyword id="KW-1214">G-protein coupled acetylcholine receptor impairing toxin</keyword>
<keyword id="KW-1213">G-protein coupled receptor impairing toxin</keyword>
<keyword id="KW-0528">Neurotoxin</keyword>
<keyword id="KW-0629">Postsynaptic neurotoxin</keyword>
<keyword id="KW-0964">Secreted</keyword>
<keyword id="KW-0800">Toxin</keyword>
<comment type="function">
    <text evidence="1 2 4 6">Shows a non-competitive interaction with adrenergic and muscarinic receptors. Binds to alpha-2b (ADRA2B) (IC(50)=2.3 nM), alpha-1a (ADRA1A), alpha-1b (ADRA1B), and alpha-2c (ADRA2C) adrenergic receptors. Reversibly binds to M1 (CHRM1) muscarinic acetylcholine receptors, probably by interacting with the orthosteric site (PubMed:12488533, PubMed:24793485, PubMed:7778123). Also reveals a slightly weaker effect at M3 (CHRM3) and M4 (CHRM4) receptors (PubMed:12488533, PubMed:24793485, PubMed:7778123). The order of potency is ADRA2B&gt;&gt;CHRM1&gt;ADRA1A&gt;ADRA1B&gt;ADRA2C/CHRM4 (PubMed:24793485).</text>
</comment>
<comment type="subcellular location">
    <subcellularLocation>
        <location evidence="5 7">Secreted</location>
    </subcellularLocation>
</comment>
<comment type="tissue specificity">
    <text evidence="10">Expressed by the venom gland.</text>
</comment>
<comment type="miscellaneous">
    <text evidence="1 2 4">Negative results: does not show interaction with adrenergic receptors (ADRA1D, ADRA2A, ADRB1, ADRB2), dopaminergic receptors (DRD1, DRD2, DRD3, DRD4, DRD5), histaminic receptors (HRH1, HRH3, HRH4) and serotoninergic receptors (HTR1A, HTR2A, HTR2B, HTR2C, HTR5A, HTR6, HTR7) (PubMed:21557730, PubMed:24793485). Does not show interaction with muscarinic receptors (CHRM2, CHRM3, CHRM5) (PubMed:12488533, PubMed:24793485, PubMed:7778123).</text>
</comment>
<comment type="miscellaneous">
    <text evidence="10">Is classified as a P-type cytotoxin, since a proline residue stands at position 33 (Pro-31 in standard classification).</text>
</comment>
<comment type="similarity">
    <text evidence="11">Belongs to the three-finger toxin family. Short-chain subfamily. Aminergic toxin sub-subfamily.</text>
</comment>
<accession>P81030</accession>
<reference key="1">
    <citation type="journal article" date="1994" name="Ann. N. Y. Acad. Sci.">
        <title>Protein toxins that bind to muscarinic acetylcholine receptors.</title>
        <authorList>
            <person name="Karlsson E."/>
            <person name="Jolkkonen M."/>
            <person name="Satyapan N."/>
            <person name="Adem A."/>
            <person name="Kumlin E."/>
            <person name="Hellman U."/>
            <person name="Wernstedt C."/>
        </authorList>
    </citation>
    <scope>PROTEIN SEQUENCE</scope>
    <scope>SUBCELLULAR LOCATION</scope>
    <source>
        <tissue>Venom</tissue>
    </source>
</reference>
<reference key="2">
    <citation type="journal article" date="1995" name="Toxicon">
        <title>A snake toxin against muscarinic acetylcholine receptors: amino acid sequence, subtype specificity and effect on guinea-pig ileum.</title>
        <authorList>
            <person name="Jolkkonen M."/>
            <person name="Adem A."/>
            <person name="Hellman U."/>
            <person name="Wernstedt C."/>
            <person name="Karlsson E."/>
        </authorList>
    </citation>
    <scope>PROTEIN SEQUENCE</scope>
    <scope>SUBCELLULAR LOCATION</scope>
    <source>
        <tissue>Venom</tissue>
    </source>
</reference>
<reference key="3">
    <citation type="journal article" date="1995" name="Toxicon">
        <title>Binding of muscarinic toxins MTx1 and MTx2 from the venom of the green mamba Dendroaspis angusticeps to cloned human muscarinic cholinoceptors.</title>
        <authorList>
            <person name="Kornisiuk E."/>
            <person name="Jerusalinsky D."/>
            <person name="Cervenansky C."/>
            <person name="Harvey A.L."/>
        </authorList>
    </citation>
    <scope>FUNCTION</scope>
</reference>
<reference key="4">
    <citation type="journal article" date="2003" name="Mol. Pharmacol.">
        <title>Chemical synthesis of MT1 and MT7 muscarinic toxins: critical role of Arg-34 in their interaction with M1 muscarinic receptor.</title>
        <authorList>
            <person name="Mourier G."/>
            <person name="Dutertre S."/>
            <person name="Fruchart-Gaillard C."/>
            <person name="Menez A."/>
            <person name="Servent D."/>
        </authorList>
    </citation>
    <scope>SYNTHESIS</scope>
    <scope>MUTAGENESIS OF ARG-34</scope>
    <scope>FUNCTION</scope>
    <source>
        <tissue>Venom</tissue>
    </source>
</reference>
<reference key="5">
    <citation type="journal article" date="2011" name="Br. J. Pharmacol.">
        <title>Adrenoceptor activity of muscarinic toxins identified from mamba venoms.</title>
        <authorList>
            <person name="Naereoja K."/>
            <person name="Kukkonen J.P."/>
            <person name="Rondinelli S."/>
            <person name="Toivola D.M."/>
            <person name="Meriluoto J."/>
            <person name="Naesman J."/>
        </authorList>
    </citation>
    <scope>FUNCTION</scope>
</reference>
<reference key="6">
    <citation type="journal article" date="2014" name="Biochimie">
        <title>Polypharmacology profiles and phylogenetic analysis of three-finger toxins from mamba venom: case of aminergic toxins.</title>
        <authorList>
            <person name="Blanchet G."/>
            <person name="Collet G."/>
            <person name="Mourier G."/>
            <person name="Gilles N."/>
            <person name="Fruchart-Gaillard C."/>
            <person name="Marcon E."/>
            <person name="Servent D."/>
        </authorList>
    </citation>
    <scope>SYNTHESIS</scope>
    <scope>FUNCTION</scope>
</reference>
<reference key="7">
    <citation type="journal article" date="2012" name="PLoS ONE">
        <title>Engineering of three-finger fold toxins creates ligands with original pharmacological profiles for muscarinic and adrenergic receptors.</title>
        <authorList>
            <person name="Fruchart-Gaillard C."/>
            <person name="Mourier G."/>
            <person name="Blanchet G."/>
            <person name="Vera L."/>
            <person name="Gilles N."/>
            <person name="Menez R."/>
            <person name="Marcon E."/>
            <person name="Stura E.A."/>
            <person name="Servent D."/>
        </authorList>
    </citation>
    <scope>X-RAY CRYSTALLOGRAPHY (1.25 ANGSTROMS) OF 1-16 AND 49-57</scope>
    <scope>SYNTHESIS</scope>
    <scope>DISULFIDE BOND</scope>
</reference>
<proteinExistence type="evidence at protein level"/>
<organism>
    <name type="scientific">Dendroaspis angusticeps</name>
    <name type="common">Eastern green mamba</name>
    <name type="synonym">Naja angusticeps</name>
    <dbReference type="NCBI Taxonomy" id="8618"/>
    <lineage>
        <taxon>Eukaryota</taxon>
        <taxon>Metazoa</taxon>
        <taxon>Chordata</taxon>
        <taxon>Craniata</taxon>
        <taxon>Vertebrata</taxon>
        <taxon>Euteleostomi</taxon>
        <taxon>Lepidosauria</taxon>
        <taxon>Squamata</taxon>
        <taxon>Bifurcata</taxon>
        <taxon>Unidentata</taxon>
        <taxon>Episquamata</taxon>
        <taxon>Toxicofera</taxon>
        <taxon>Serpentes</taxon>
        <taxon>Colubroidea</taxon>
        <taxon>Elapidae</taxon>
        <taxon>Elapinae</taxon>
        <taxon>Dendroaspis</taxon>
    </lineage>
</organism>
<sequence length="66" mass="7518">LTCVTSKSIFGITTENCPDGQNLCFKKWYYIVPRYSDITWGCAATCPKPTNVRETIRCCETDKCNE</sequence>